<proteinExistence type="inferred from homology"/>
<gene>
    <name evidence="1" type="primary">dnaA</name>
    <name type="ordered locus">Dde_2320</name>
</gene>
<comment type="function">
    <text evidence="1">Plays an essential role in the initiation and regulation of chromosomal replication. ATP-DnaA binds to the origin of replication (oriC) to initiate formation of the DNA replication initiation complex once per cell cycle. Binds the DnaA box (a 9 base pair repeat at the origin) and separates the double-stranded (ds)DNA. Forms a right-handed helical filament on oriC DNA; dsDNA binds to the exterior of the filament while single-stranded (ss)DNA is stabiized in the filament's interior. The ATP-DnaA-oriC complex binds and stabilizes one strand of the AT-rich DNA unwinding element (DUE), permitting loading of DNA polymerase. After initiation quickly degrades to an ADP-DnaA complex that is not apt for DNA replication. Binds acidic phospholipids.</text>
</comment>
<comment type="subunit">
    <text evidence="1">Oligomerizes as a right-handed, spiral filament on DNA at oriC.</text>
</comment>
<comment type="subcellular location">
    <subcellularLocation>
        <location evidence="1">Cytoplasm</location>
    </subcellularLocation>
</comment>
<comment type="domain">
    <text evidence="1">Domain I is involved in oligomerization and binding regulators, domain II is flexibile and of varying length in different bacteria, domain III forms the AAA+ region, while domain IV binds dsDNA.</text>
</comment>
<comment type="similarity">
    <text evidence="1">Belongs to the DnaA family.</text>
</comment>
<evidence type="ECO:0000255" key="1">
    <source>
        <dbReference type="HAMAP-Rule" id="MF_00377"/>
    </source>
</evidence>
<name>DNAA_OLEA2</name>
<protein>
    <recommendedName>
        <fullName evidence="1">Chromosomal replication initiator protein DnaA</fullName>
    </recommendedName>
</protein>
<accession>Q30YX9</accession>
<sequence length="461" mass="51836">MINAWAQIEHTLRDNLNPGLFKVWIKPLAAEQAGDSLRLVAPNAFVASWVRDRLMNEIEKAAASVLGSVPTITVVSGEEPAAAPRPVQVPAQKRPAAARTSGAEQMGLPLHYASRSADSIKWMHSFDEFVVGPSNQMAFAASQDICQQSFRSDTLFLSSDPGLGKTHLLHAVGQQLCNISNRTLPRVEYLTAEEFATRLICALKAKEVDRFKARYRDVDVLLLEDVHFLQGKQRMQDEVLSTVKALQSRGAKVLFSSSFAPKDLNDLDSQLTSRFCSGLLAVIEKPTFETRKQILREKARLHHVQLPEQVADLLADNIRADVRQIESCLRNLLLKARLLNQQITMDMAWEIIGHYAKREAVLDIDAIVRQICSGFDISKEQLQSRSRRRELVIARNTAFFLARKHTDLSLEEIGKRFNRKHSTVIKGIANIEREMNKETPLGRQVVNAVNMVERNGRIIHP</sequence>
<organism>
    <name type="scientific">Oleidesulfovibrio alaskensis (strain ATCC BAA-1058 / DSM 17464 / G20)</name>
    <name type="common">Desulfovibrio alaskensis</name>
    <dbReference type="NCBI Taxonomy" id="207559"/>
    <lineage>
        <taxon>Bacteria</taxon>
        <taxon>Pseudomonadati</taxon>
        <taxon>Thermodesulfobacteriota</taxon>
        <taxon>Desulfovibrionia</taxon>
        <taxon>Desulfovibrionales</taxon>
        <taxon>Desulfovibrionaceae</taxon>
        <taxon>Oleidesulfovibrio</taxon>
    </lineage>
</organism>
<dbReference type="EMBL" id="CP000112">
    <property type="protein sequence ID" value="ABB39117.1"/>
    <property type="molecule type" value="Genomic_DNA"/>
</dbReference>
<dbReference type="RefSeq" id="WP_011368197.1">
    <property type="nucleotide sequence ID" value="NC_007519.1"/>
</dbReference>
<dbReference type="SMR" id="Q30YX9"/>
<dbReference type="STRING" id="207559.Dde_2320"/>
<dbReference type="KEGG" id="dde:Dde_2320"/>
<dbReference type="eggNOG" id="COG0593">
    <property type="taxonomic scope" value="Bacteria"/>
</dbReference>
<dbReference type="HOGENOM" id="CLU_026910_3_0_7"/>
<dbReference type="Proteomes" id="UP000002710">
    <property type="component" value="Chromosome"/>
</dbReference>
<dbReference type="GO" id="GO:0005737">
    <property type="term" value="C:cytoplasm"/>
    <property type="evidence" value="ECO:0007669"/>
    <property type="project" value="UniProtKB-SubCell"/>
</dbReference>
<dbReference type="GO" id="GO:0005886">
    <property type="term" value="C:plasma membrane"/>
    <property type="evidence" value="ECO:0007669"/>
    <property type="project" value="TreeGrafter"/>
</dbReference>
<dbReference type="GO" id="GO:0005524">
    <property type="term" value="F:ATP binding"/>
    <property type="evidence" value="ECO:0007669"/>
    <property type="project" value="UniProtKB-UniRule"/>
</dbReference>
<dbReference type="GO" id="GO:0016887">
    <property type="term" value="F:ATP hydrolysis activity"/>
    <property type="evidence" value="ECO:0007669"/>
    <property type="project" value="InterPro"/>
</dbReference>
<dbReference type="GO" id="GO:0003688">
    <property type="term" value="F:DNA replication origin binding"/>
    <property type="evidence" value="ECO:0007669"/>
    <property type="project" value="UniProtKB-UniRule"/>
</dbReference>
<dbReference type="GO" id="GO:0008289">
    <property type="term" value="F:lipid binding"/>
    <property type="evidence" value="ECO:0007669"/>
    <property type="project" value="UniProtKB-KW"/>
</dbReference>
<dbReference type="GO" id="GO:0006270">
    <property type="term" value="P:DNA replication initiation"/>
    <property type="evidence" value="ECO:0007669"/>
    <property type="project" value="UniProtKB-UniRule"/>
</dbReference>
<dbReference type="GO" id="GO:0006275">
    <property type="term" value="P:regulation of DNA replication"/>
    <property type="evidence" value="ECO:0007669"/>
    <property type="project" value="UniProtKB-UniRule"/>
</dbReference>
<dbReference type="CDD" id="cd00009">
    <property type="entry name" value="AAA"/>
    <property type="match status" value="1"/>
</dbReference>
<dbReference type="CDD" id="cd06571">
    <property type="entry name" value="Bac_DnaA_C"/>
    <property type="match status" value="1"/>
</dbReference>
<dbReference type="Gene3D" id="1.10.1750.10">
    <property type="match status" value="1"/>
</dbReference>
<dbReference type="Gene3D" id="1.10.8.60">
    <property type="match status" value="1"/>
</dbReference>
<dbReference type="Gene3D" id="3.30.300.180">
    <property type="match status" value="1"/>
</dbReference>
<dbReference type="Gene3D" id="3.40.50.300">
    <property type="entry name" value="P-loop containing nucleotide triphosphate hydrolases"/>
    <property type="match status" value="1"/>
</dbReference>
<dbReference type="HAMAP" id="MF_00377">
    <property type="entry name" value="DnaA_bact"/>
    <property type="match status" value="1"/>
</dbReference>
<dbReference type="InterPro" id="IPR003593">
    <property type="entry name" value="AAA+_ATPase"/>
</dbReference>
<dbReference type="InterPro" id="IPR001957">
    <property type="entry name" value="Chromosome_initiator_DnaA"/>
</dbReference>
<dbReference type="InterPro" id="IPR020591">
    <property type="entry name" value="Chromosome_initiator_DnaA-like"/>
</dbReference>
<dbReference type="InterPro" id="IPR018312">
    <property type="entry name" value="Chromosome_initiator_DnaA_CS"/>
</dbReference>
<dbReference type="InterPro" id="IPR013159">
    <property type="entry name" value="DnaA_C"/>
</dbReference>
<dbReference type="InterPro" id="IPR013317">
    <property type="entry name" value="DnaA_dom"/>
</dbReference>
<dbReference type="InterPro" id="IPR024633">
    <property type="entry name" value="DnaA_N_dom"/>
</dbReference>
<dbReference type="InterPro" id="IPR038454">
    <property type="entry name" value="DnaA_N_sf"/>
</dbReference>
<dbReference type="InterPro" id="IPR027417">
    <property type="entry name" value="P-loop_NTPase"/>
</dbReference>
<dbReference type="InterPro" id="IPR010921">
    <property type="entry name" value="Trp_repressor/repl_initiator"/>
</dbReference>
<dbReference type="NCBIfam" id="TIGR00362">
    <property type="entry name" value="DnaA"/>
    <property type="match status" value="1"/>
</dbReference>
<dbReference type="PANTHER" id="PTHR30050">
    <property type="entry name" value="CHROMOSOMAL REPLICATION INITIATOR PROTEIN DNAA"/>
    <property type="match status" value="1"/>
</dbReference>
<dbReference type="PANTHER" id="PTHR30050:SF2">
    <property type="entry name" value="CHROMOSOMAL REPLICATION INITIATOR PROTEIN DNAA"/>
    <property type="match status" value="1"/>
</dbReference>
<dbReference type="Pfam" id="PF00308">
    <property type="entry name" value="Bac_DnaA"/>
    <property type="match status" value="1"/>
</dbReference>
<dbReference type="Pfam" id="PF08299">
    <property type="entry name" value="Bac_DnaA_C"/>
    <property type="match status" value="1"/>
</dbReference>
<dbReference type="Pfam" id="PF11638">
    <property type="entry name" value="DnaA_N"/>
    <property type="match status" value="1"/>
</dbReference>
<dbReference type="PRINTS" id="PR00051">
    <property type="entry name" value="DNAA"/>
</dbReference>
<dbReference type="SMART" id="SM00382">
    <property type="entry name" value="AAA"/>
    <property type="match status" value="1"/>
</dbReference>
<dbReference type="SMART" id="SM00760">
    <property type="entry name" value="Bac_DnaA_C"/>
    <property type="match status" value="1"/>
</dbReference>
<dbReference type="SUPFAM" id="SSF52540">
    <property type="entry name" value="P-loop containing nucleoside triphosphate hydrolases"/>
    <property type="match status" value="1"/>
</dbReference>
<dbReference type="SUPFAM" id="SSF48295">
    <property type="entry name" value="TrpR-like"/>
    <property type="match status" value="1"/>
</dbReference>
<dbReference type="PROSITE" id="PS01008">
    <property type="entry name" value="DNAA"/>
    <property type="match status" value="1"/>
</dbReference>
<feature type="chain" id="PRO_1000048641" description="Chromosomal replication initiator protein DnaA">
    <location>
        <begin position="1"/>
        <end position="461"/>
    </location>
</feature>
<feature type="region of interest" description="Domain I, interacts with DnaA modulators" evidence="1">
    <location>
        <begin position="1"/>
        <end position="68"/>
    </location>
</feature>
<feature type="region of interest" description="Domain II" evidence="1">
    <location>
        <begin position="68"/>
        <end position="118"/>
    </location>
</feature>
<feature type="region of interest" description="Domain III, AAA+ region" evidence="1">
    <location>
        <begin position="119"/>
        <end position="336"/>
    </location>
</feature>
<feature type="region of interest" description="Domain IV, binds dsDNA" evidence="1">
    <location>
        <begin position="337"/>
        <end position="461"/>
    </location>
</feature>
<feature type="binding site" evidence="1">
    <location>
        <position position="162"/>
    </location>
    <ligand>
        <name>ATP</name>
        <dbReference type="ChEBI" id="CHEBI:30616"/>
    </ligand>
</feature>
<feature type="binding site" evidence="1">
    <location>
        <position position="164"/>
    </location>
    <ligand>
        <name>ATP</name>
        <dbReference type="ChEBI" id="CHEBI:30616"/>
    </ligand>
</feature>
<feature type="binding site" evidence="1">
    <location>
        <position position="165"/>
    </location>
    <ligand>
        <name>ATP</name>
        <dbReference type="ChEBI" id="CHEBI:30616"/>
    </ligand>
</feature>
<feature type="binding site" evidence="1">
    <location>
        <position position="166"/>
    </location>
    <ligand>
        <name>ATP</name>
        <dbReference type="ChEBI" id="CHEBI:30616"/>
    </ligand>
</feature>
<keyword id="KW-0067">ATP-binding</keyword>
<keyword id="KW-0963">Cytoplasm</keyword>
<keyword id="KW-0235">DNA replication</keyword>
<keyword id="KW-0238">DNA-binding</keyword>
<keyword id="KW-0446">Lipid-binding</keyword>
<keyword id="KW-0547">Nucleotide-binding</keyword>
<keyword id="KW-1185">Reference proteome</keyword>
<reference key="1">
    <citation type="journal article" date="2011" name="J. Bacteriol.">
        <title>Complete genome sequence and updated annotation of Desulfovibrio alaskensis G20.</title>
        <authorList>
            <person name="Hauser L.J."/>
            <person name="Land M.L."/>
            <person name="Brown S.D."/>
            <person name="Larimer F."/>
            <person name="Keller K.L."/>
            <person name="Rapp-Giles B.J."/>
            <person name="Price M.N."/>
            <person name="Lin M."/>
            <person name="Bruce D.C."/>
            <person name="Detter J.C."/>
            <person name="Tapia R."/>
            <person name="Han C.S."/>
            <person name="Goodwin L.A."/>
            <person name="Cheng J.F."/>
            <person name="Pitluck S."/>
            <person name="Copeland A."/>
            <person name="Lucas S."/>
            <person name="Nolan M."/>
            <person name="Lapidus A.L."/>
            <person name="Palumbo A.V."/>
            <person name="Wall J.D."/>
        </authorList>
    </citation>
    <scope>NUCLEOTIDE SEQUENCE [LARGE SCALE GENOMIC DNA]</scope>
    <source>
        <strain>ATCC BAA-1058 / DSM 17464 / G20</strain>
    </source>
</reference>